<protein>
    <recommendedName>
        <fullName evidence="1">3-octaprenyl-4-hydroxybenzoate carboxy-lyase</fullName>
        <ecNumber evidence="1">4.1.1.98</ecNumber>
    </recommendedName>
    <alternativeName>
        <fullName evidence="1">Polyprenyl p-hydroxybenzoate decarboxylase</fullName>
    </alternativeName>
</protein>
<reference key="1">
    <citation type="submission" date="2008-06" db="EMBL/GenBank/DDBJ databases">
        <title>Genome and proteome analysis of A. pleuropneumoniae serotype 7.</title>
        <authorList>
            <person name="Linke B."/>
            <person name="Buettner F."/>
            <person name="Martinez-Arias R."/>
            <person name="Goesmann A."/>
            <person name="Baltes N."/>
            <person name="Tegetmeyer H."/>
            <person name="Singh M."/>
            <person name="Gerlach G.F."/>
        </authorList>
    </citation>
    <scope>NUCLEOTIDE SEQUENCE [LARGE SCALE GENOMIC DNA]</scope>
    <source>
        <strain>AP76</strain>
    </source>
</reference>
<accession>B3H2C0</accession>
<dbReference type="EC" id="4.1.1.98" evidence="1"/>
<dbReference type="EMBL" id="CP001091">
    <property type="protein sequence ID" value="ACE62145.1"/>
    <property type="molecule type" value="Genomic_DNA"/>
</dbReference>
<dbReference type="RefSeq" id="WP_005617934.1">
    <property type="nucleotide sequence ID" value="NC_010939.1"/>
</dbReference>
<dbReference type="SMR" id="B3H2C0"/>
<dbReference type="KEGG" id="apa:APP7_1493"/>
<dbReference type="HOGENOM" id="CLU_023348_4_1_6"/>
<dbReference type="UniPathway" id="UPA00232"/>
<dbReference type="Proteomes" id="UP000001226">
    <property type="component" value="Chromosome"/>
</dbReference>
<dbReference type="GO" id="GO:0005829">
    <property type="term" value="C:cytosol"/>
    <property type="evidence" value="ECO:0007669"/>
    <property type="project" value="TreeGrafter"/>
</dbReference>
<dbReference type="GO" id="GO:0005886">
    <property type="term" value="C:plasma membrane"/>
    <property type="evidence" value="ECO:0007669"/>
    <property type="project" value="UniProtKB-SubCell"/>
</dbReference>
<dbReference type="GO" id="GO:0008694">
    <property type="term" value="F:3-octaprenyl-4-hydroxybenzoate carboxy-lyase activity"/>
    <property type="evidence" value="ECO:0007669"/>
    <property type="project" value="UniProtKB-UniRule"/>
</dbReference>
<dbReference type="GO" id="GO:0046872">
    <property type="term" value="F:metal ion binding"/>
    <property type="evidence" value="ECO:0007669"/>
    <property type="project" value="UniProtKB-KW"/>
</dbReference>
<dbReference type="GO" id="GO:0006744">
    <property type="term" value="P:ubiquinone biosynthetic process"/>
    <property type="evidence" value="ECO:0007669"/>
    <property type="project" value="UniProtKB-UniRule"/>
</dbReference>
<dbReference type="FunFam" id="1.20.5.570:FF:000001">
    <property type="entry name" value="3-octaprenyl-4-hydroxybenzoate carboxy-lyase"/>
    <property type="match status" value="1"/>
</dbReference>
<dbReference type="FunFam" id="3.40.1670.10:FF:000001">
    <property type="entry name" value="3-octaprenyl-4-hydroxybenzoate carboxy-lyase"/>
    <property type="match status" value="1"/>
</dbReference>
<dbReference type="Gene3D" id="1.20.5.570">
    <property type="entry name" value="Single helix bin"/>
    <property type="match status" value="1"/>
</dbReference>
<dbReference type="Gene3D" id="3.40.1670.10">
    <property type="entry name" value="UbiD C-terminal domain-like"/>
    <property type="match status" value="1"/>
</dbReference>
<dbReference type="HAMAP" id="MF_01636">
    <property type="entry name" value="UbiD"/>
    <property type="match status" value="1"/>
</dbReference>
<dbReference type="InterPro" id="IPR002830">
    <property type="entry name" value="UbiD"/>
</dbReference>
<dbReference type="InterPro" id="IPR049381">
    <property type="entry name" value="UbiD-like_C"/>
</dbReference>
<dbReference type="InterPro" id="IPR049383">
    <property type="entry name" value="UbiD-like_N"/>
</dbReference>
<dbReference type="InterPro" id="IPR023677">
    <property type="entry name" value="UbiD_bacteria"/>
</dbReference>
<dbReference type="InterPro" id="IPR048304">
    <property type="entry name" value="UbiD_Rift_dom"/>
</dbReference>
<dbReference type="NCBIfam" id="NF008175">
    <property type="entry name" value="PRK10922.1"/>
    <property type="match status" value="1"/>
</dbReference>
<dbReference type="NCBIfam" id="TIGR00148">
    <property type="entry name" value="UbiD family decarboxylase"/>
    <property type="match status" value="1"/>
</dbReference>
<dbReference type="PANTHER" id="PTHR30108">
    <property type="entry name" value="3-OCTAPRENYL-4-HYDROXYBENZOATE CARBOXY-LYASE-RELATED"/>
    <property type="match status" value="1"/>
</dbReference>
<dbReference type="PANTHER" id="PTHR30108:SF17">
    <property type="entry name" value="FERULIC ACID DECARBOXYLASE 1"/>
    <property type="match status" value="1"/>
</dbReference>
<dbReference type="Pfam" id="PF01977">
    <property type="entry name" value="UbiD"/>
    <property type="match status" value="1"/>
</dbReference>
<dbReference type="Pfam" id="PF20696">
    <property type="entry name" value="UbiD_C"/>
    <property type="match status" value="1"/>
</dbReference>
<dbReference type="Pfam" id="PF20695">
    <property type="entry name" value="UbiD_N"/>
    <property type="match status" value="1"/>
</dbReference>
<dbReference type="SUPFAM" id="SSF50475">
    <property type="entry name" value="FMN-binding split barrel"/>
    <property type="match status" value="1"/>
</dbReference>
<dbReference type="SUPFAM" id="SSF143968">
    <property type="entry name" value="UbiD C-terminal domain-like"/>
    <property type="match status" value="1"/>
</dbReference>
<sequence>MKYKDLREFLTLLEGQGELVRIKQEIDPYLEMAEISDRTLRKGGPAILFENPKGYRMPVLCNLFGTPKRVALGMGQEDTHALRELGKLLAFLKEPEPPKGFKELIGQLPQWKQVLNMPSKVLGKADCQQVVLSGDEVDLHKLPIMHCHQGDVAPLVTWGLTITQGPYKKRQNLGIYRQQLIGKNKLIMRWLSHRGGALDFHEWKEANPDKPFPVSVAIGADPATILAAVTPIPDTLSEYAFAGLLRGQKTEVTKSISNDLEIPASAEIVLEGYIDPNETALEGPYGDHTGYYNEQEYFPVFTVTHITMRRDAIYHSTYTGRPPDEPAVLGEALNEVFIPILQKQFPEIVDFYLPPEGCSYRLAVVTIKKQYAGHAKRVMMGVWSFLRQFMYTKFVIVCDDDVNARDWKDVIWAITTRCDPSRDTTLIDHTPIDYLDFASPIAGLGSKMGIDATNKWPGETSREWGTPIKKDPNVVKLVDEIWDQLGL</sequence>
<gene>
    <name evidence="1" type="primary">ubiD</name>
    <name type="ordered locus">APP7_1493</name>
</gene>
<feature type="chain" id="PRO_1000186704" description="3-octaprenyl-4-hydroxybenzoate carboxy-lyase">
    <location>
        <begin position="1"/>
        <end position="487"/>
    </location>
</feature>
<feature type="active site" description="Proton donor" evidence="1">
    <location>
        <position position="287"/>
    </location>
</feature>
<feature type="binding site" evidence="1">
    <location>
        <position position="172"/>
    </location>
    <ligand>
        <name>Mn(2+)</name>
        <dbReference type="ChEBI" id="CHEBI:29035"/>
    </ligand>
</feature>
<feature type="binding site" evidence="1">
    <location>
        <begin position="175"/>
        <end position="177"/>
    </location>
    <ligand>
        <name>prenylated FMN</name>
        <dbReference type="ChEBI" id="CHEBI:87746"/>
    </ligand>
</feature>
<feature type="binding site" evidence="1">
    <location>
        <begin position="189"/>
        <end position="191"/>
    </location>
    <ligand>
        <name>prenylated FMN</name>
        <dbReference type="ChEBI" id="CHEBI:87746"/>
    </ligand>
</feature>
<feature type="binding site" evidence="1">
    <location>
        <begin position="194"/>
        <end position="195"/>
    </location>
    <ligand>
        <name>prenylated FMN</name>
        <dbReference type="ChEBI" id="CHEBI:87746"/>
    </ligand>
</feature>
<feature type="binding site" evidence="1">
    <location>
        <position position="238"/>
    </location>
    <ligand>
        <name>Mn(2+)</name>
        <dbReference type="ChEBI" id="CHEBI:29035"/>
    </ligand>
</feature>
<organism>
    <name type="scientific">Actinobacillus pleuropneumoniae serotype 7 (strain AP76)</name>
    <dbReference type="NCBI Taxonomy" id="537457"/>
    <lineage>
        <taxon>Bacteria</taxon>
        <taxon>Pseudomonadati</taxon>
        <taxon>Pseudomonadota</taxon>
        <taxon>Gammaproteobacteria</taxon>
        <taxon>Pasteurellales</taxon>
        <taxon>Pasteurellaceae</taxon>
        <taxon>Actinobacillus</taxon>
    </lineage>
</organism>
<keyword id="KW-1003">Cell membrane</keyword>
<keyword id="KW-0210">Decarboxylase</keyword>
<keyword id="KW-0285">Flavoprotein</keyword>
<keyword id="KW-0288">FMN</keyword>
<keyword id="KW-0456">Lyase</keyword>
<keyword id="KW-0464">Manganese</keyword>
<keyword id="KW-0472">Membrane</keyword>
<keyword id="KW-0479">Metal-binding</keyword>
<keyword id="KW-0831">Ubiquinone biosynthesis</keyword>
<comment type="function">
    <text evidence="1">Catalyzes the decarboxylation of 3-octaprenyl-4-hydroxy benzoate to 2-octaprenylphenol, an intermediate step in ubiquinone biosynthesis.</text>
</comment>
<comment type="catalytic activity">
    <reaction evidence="1">
        <text>a 4-hydroxy-3-(all-trans-polyprenyl)benzoate + H(+) = a 2-(all-trans-polyprenyl)phenol + CO2</text>
        <dbReference type="Rhea" id="RHEA:41680"/>
        <dbReference type="Rhea" id="RHEA-COMP:9514"/>
        <dbReference type="Rhea" id="RHEA-COMP:9516"/>
        <dbReference type="ChEBI" id="CHEBI:1269"/>
        <dbReference type="ChEBI" id="CHEBI:15378"/>
        <dbReference type="ChEBI" id="CHEBI:16526"/>
        <dbReference type="ChEBI" id="CHEBI:78396"/>
        <dbReference type="EC" id="4.1.1.98"/>
    </reaction>
</comment>
<comment type="cofactor">
    <cofactor evidence="1">
        <name>prenylated FMN</name>
        <dbReference type="ChEBI" id="CHEBI:87746"/>
    </cofactor>
    <text evidence="1">Binds 1 prenylated FMN per subunit.</text>
</comment>
<comment type="cofactor">
    <cofactor evidence="1">
        <name>Mn(2+)</name>
        <dbReference type="ChEBI" id="CHEBI:29035"/>
    </cofactor>
</comment>
<comment type="pathway">
    <text evidence="1">Cofactor biosynthesis; ubiquinone biosynthesis.</text>
</comment>
<comment type="subunit">
    <text evidence="1">Homohexamer.</text>
</comment>
<comment type="subcellular location">
    <subcellularLocation>
        <location evidence="1">Cell membrane</location>
        <topology evidence="1">Peripheral membrane protein</topology>
    </subcellularLocation>
</comment>
<comment type="similarity">
    <text evidence="1">Belongs to the UbiD family.</text>
</comment>
<evidence type="ECO:0000255" key="1">
    <source>
        <dbReference type="HAMAP-Rule" id="MF_01636"/>
    </source>
</evidence>
<name>UBID_ACTP7</name>
<proteinExistence type="inferred from homology"/>